<name>TOLB_RICAE</name>
<keyword id="KW-0131">Cell cycle</keyword>
<keyword id="KW-0132">Cell division</keyword>
<keyword id="KW-0574">Periplasm</keyword>
<keyword id="KW-0732">Signal</keyword>
<dbReference type="EMBL" id="CP001612">
    <property type="protein sequence ID" value="ACP53317.1"/>
    <property type="molecule type" value="Genomic_DNA"/>
</dbReference>
<dbReference type="RefSeq" id="WP_012719562.1">
    <property type="nucleotide sequence ID" value="NC_012633.1"/>
</dbReference>
<dbReference type="SMR" id="C3PN07"/>
<dbReference type="KEGG" id="raf:RAF_ORF0380"/>
<dbReference type="HOGENOM" id="CLU_047123_0_0_5"/>
<dbReference type="Proteomes" id="UP000002305">
    <property type="component" value="Chromosome"/>
</dbReference>
<dbReference type="GO" id="GO:0042597">
    <property type="term" value="C:periplasmic space"/>
    <property type="evidence" value="ECO:0007669"/>
    <property type="project" value="UniProtKB-SubCell"/>
</dbReference>
<dbReference type="GO" id="GO:0051301">
    <property type="term" value="P:cell division"/>
    <property type="evidence" value="ECO:0007669"/>
    <property type="project" value="UniProtKB-UniRule"/>
</dbReference>
<dbReference type="GO" id="GO:0017038">
    <property type="term" value="P:protein import"/>
    <property type="evidence" value="ECO:0007669"/>
    <property type="project" value="InterPro"/>
</dbReference>
<dbReference type="Gene3D" id="2.120.10.30">
    <property type="entry name" value="TolB, C-terminal domain"/>
    <property type="match status" value="1"/>
</dbReference>
<dbReference type="Gene3D" id="3.40.50.10070">
    <property type="entry name" value="TolB, N-terminal domain"/>
    <property type="match status" value="1"/>
</dbReference>
<dbReference type="HAMAP" id="MF_00671">
    <property type="entry name" value="TolB"/>
    <property type="match status" value="1"/>
</dbReference>
<dbReference type="InterPro" id="IPR011042">
    <property type="entry name" value="6-blade_b-propeller_TolB-like"/>
</dbReference>
<dbReference type="InterPro" id="IPR011659">
    <property type="entry name" value="PD40"/>
</dbReference>
<dbReference type="InterPro" id="IPR014167">
    <property type="entry name" value="Tol-Pal_TolB"/>
</dbReference>
<dbReference type="InterPro" id="IPR007195">
    <property type="entry name" value="TolB_N"/>
</dbReference>
<dbReference type="NCBIfam" id="TIGR02800">
    <property type="entry name" value="propeller_TolB"/>
    <property type="match status" value="1"/>
</dbReference>
<dbReference type="PANTHER" id="PTHR36842:SF1">
    <property type="entry name" value="PROTEIN TOLB"/>
    <property type="match status" value="1"/>
</dbReference>
<dbReference type="PANTHER" id="PTHR36842">
    <property type="entry name" value="PROTEIN TOLB HOMOLOG"/>
    <property type="match status" value="1"/>
</dbReference>
<dbReference type="Pfam" id="PF07676">
    <property type="entry name" value="PD40"/>
    <property type="match status" value="4"/>
</dbReference>
<dbReference type="Pfam" id="PF04052">
    <property type="entry name" value="TolB_N"/>
    <property type="match status" value="1"/>
</dbReference>
<dbReference type="SUPFAM" id="SSF52964">
    <property type="entry name" value="TolB, N-terminal domain"/>
    <property type="match status" value="1"/>
</dbReference>
<dbReference type="SUPFAM" id="SSF69304">
    <property type="entry name" value="Tricorn protease N-terminal domain"/>
    <property type="match status" value="1"/>
</dbReference>
<feature type="signal peptide" evidence="1">
    <location>
        <begin position="1"/>
        <end position="19"/>
    </location>
</feature>
<feature type="chain" id="PRO_1000212510" description="Tol-Pal system protein TolB" evidence="1">
    <location>
        <begin position="20"/>
        <end position="444"/>
    </location>
</feature>
<comment type="function">
    <text evidence="1">Part of the Tol-Pal system, which plays a role in outer membrane invagination during cell division and is important for maintaining outer membrane integrity.</text>
</comment>
<comment type="subunit">
    <text evidence="1">The Tol-Pal system is composed of five core proteins: the inner membrane proteins TolA, TolQ and TolR, the periplasmic protein TolB and the outer membrane protein Pal. They form a network linking the inner and outer membranes and the peptidoglycan layer.</text>
</comment>
<comment type="subcellular location">
    <subcellularLocation>
        <location evidence="1">Periplasm</location>
    </subcellularLocation>
</comment>
<comment type="similarity">
    <text evidence="1">Belongs to the TolB family.</text>
</comment>
<accession>C3PN07</accession>
<organism>
    <name type="scientific">Rickettsia africae (strain ESF-5)</name>
    <dbReference type="NCBI Taxonomy" id="347255"/>
    <lineage>
        <taxon>Bacteria</taxon>
        <taxon>Pseudomonadati</taxon>
        <taxon>Pseudomonadota</taxon>
        <taxon>Alphaproteobacteria</taxon>
        <taxon>Rickettsiales</taxon>
        <taxon>Rickettsiaceae</taxon>
        <taxon>Rickettsieae</taxon>
        <taxon>Rickettsia</taxon>
        <taxon>spotted fever group</taxon>
    </lineage>
</organism>
<reference key="1">
    <citation type="journal article" date="2009" name="BMC Genomics">
        <title>Analysis of the Rickettsia africae genome reveals that virulence acquisition in Rickettsia species may be explained by genome reduction.</title>
        <authorList>
            <person name="Fournier P.-E."/>
            <person name="El Karkouri K."/>
            <person name="Leroy Q."/>
            <person name="Robert C."/>
            <person name="Giumelli B."/>
            <person name="Renesto P."/>
            <person name="Socolovschi C."/>
            <person name="Parola P."/>
            <person name="Audic S."/>
            <person name="Raoult D."/>
        </authorList>
    </citation>
    <scope>NUCLEOTIDE SEQUENCE [LARGE SCALE GENOMIC DNA]</scope>
    <source>
        <strain>ESF-5</strain>
    </source>
</reference>
<protein>
    <recommendedName>
        <fullName evidence="1">Tol-Pal system protein TolB</fullName>
    </recommendedName>
</protein>
<proteinExistence type="inferred from homology"/>
<evidence type="ECO:0000255" key="1">
    <source>
        <dbReference type="HAMAP-Rule" id="MF_00671"/>
    </source>
</evidence>
<sequence>MRNIIYFILSLLFSVTSYALETINIEHGRADPTPIAVNKFDADNSAADVLGHDMVKVISNDLKLSGLFRPISAASFIEEKTGIEYKPLFAAWRQINASLLVNGEVKKLESGKFKVSFILWDTLLEKQLAGEMLEVPKNLWRRAAHKIADKIYEKITGDAGYFDTKIVYVSESSSLPKIKRIALMDYDGANNKYLTNGKSLVLTPRFARSADKIFYVSYATKRRVLVYEKDLKTGKESVVGDFPGISFAPRFSPDGRKAVMSIAKNGSTHIYEIDLATKRLHKLTDGFGINTSPSYSPDGKKIVYNSDRNGVPQLYIMNSDGSDVQRISFGGGSYAAPSWSPRGDYIAFTKITKGDGGKTFNIGIMKACPQDDENSEKIITSGYLVESPCWSPNGRVIMFAKGWPSSAKAPGKNKIFAIDLTGHNEREIMTPADASDPEWSGVLN</sequence>
<gene>
    <name evidence="1" type="primary">tolB</name>
    <name type="ordered locus">RAF_ORF0380</name>
</gene>